<evidence type="ECO:0000255" key="1">
    <source>
        <dbReference type="HAMAP-Rule" id="MF_01554"/>
    </source>
</evidence>
<reference key="1">
    <citation type="journal article" date="2007" name="Genome Biol.">
        <title>Genome analysis and genome-wide proteomics of Thermococcus gammatolerans, the most radioresistant organism known amongst the Archaea.</title>
        <authorList>
            <person name="Zivanovic Y."/>
            <person name="Armengaud J."/>
            <person name="Lagorce A."/>
            <person name="Leplat C."/>
            <person name="Guerin P."/>
            <person name="Dutertre M."/>
            <person name="Anthouard V."/>
            <person name="Forterre P."/>
            <person name="Wincker P."/>
            <person name="Confalonieri F."/>
        </authorList>
    </citation>
    <scope>NUCLEOTIDE SEQUENCE [LARGE SCALE GENOMIC DNA]</scope>
    <source>
        <strain>DSM 15229 / JCM 11827 / EJ3</strain>
    </source>
</reference>
<protein>
    <recommendedName>
        <fullName evidence="1">Probable phosphoglucosamine mutase</fullName>
        <ecNumber evidence="1">5.4.2.10</ecNumber>
    </recommendedName>
</protein>
<accession>C5A2H8</accession>
<name>GLMM_THEGJ</name>
<dbReference type="EC" id="5.4.2.10" evidence="1"/>
<dbReference type="EMBL" id="CP001398">
    <property type="protein sequence ID" value="ACS34597.1"/>
    <property type="molecule type" value="Genomic_DNA"/>
</dbReference>
<dbReference type="RefSeq" id="WP_015859700.1">
    <property type="nucleotide sequence ID" value="NC_012804.1"/>
</dbReference>
<dbReference type="SMR" id="C5A2H8"/>
<dbReference type="STRING" id="593117.TGAM_2095"/>
<dbReference type="PaxDb" id="593117-TGAM_2095"/>
<dbReference type="GeneID" id="7988661"/>
<dbReference type="KEGG" id="tga:TGAM_2095"/>
<dbReference type="PATRIC" id="fig|593117.10.peg.2103"/>
<dbReference type="eggNOG" id="arCOG00767">
    <property type="taxonomic scope" value="Archaea"/>
</dbReference>
<dbReference type="HOGENOM" id="CLU_016950_7_1_2"/>
<dbReference type="OrthoDB" id="10363at2157"/>
<dbReference type="Proteomes" id="UP000001488">
    <property type="component" value="Chromosome"/>
</dbReference>
<dbReference type="GO" id="GO:0000287">
    <property type="term" value="F:magnesium ion binding"/>
    <property type="evidence" value="ECO:0007669"/>
    <property type="project" value="UniProtKB-UniRule"/>
</dbReference>
<dbReference type="GO" id="GO:0008966">
    <property type="term" value="F:phosphoglucosamine mutase activity"/>
    <property type="evidence" value="ECO:0007669"/>
    <property type="project" value="UniProtKB-UniRule"/>
</dbReference>
<dbReference type="GO" id="GO:0005975">
    <property type="term" value="P:carbohydrate metabolic process"/>
    <property type="evidence" value="ECO:0007669"/>
    <property type="project" value="InterPro"/>
</dbReference>
<dbReference type="CDD" id="cd03087">
    <property type="entry name" value="PGM_like1"/>
    <property type="match status" value="1"/>
</dbReference>
<dbReference type="FunFam" id="3.40.120.10:FF:000001">
    <property type="entry name" value="Phosphoglucosamine mutase"/>
    <property type="match status" value="1"/>
</dbReference>
<dbReference type="FunFam" id="3.30.310.50:FF:000009">
    <property type="entry name" value="Probable phosphoglucosamine mutase"/>
    <property type="match status" value="1"/>
</dbReference>
<dbReference type="Gene3D" id="3.40.120.10">
    <property type="entry name" value="Alpha-D-Glucose-1,6-Bisphosphate, subunit A, domain 3"/>
    <property type="match status" value="3"/>
</dbReference>
<dbReference type="Gene3D" id="3.30.310.50">
    <property type="entry name" value="Alpha-D-phosphohexomutase, C-terminal domain"/>
    <property type="match status" value="1"/>
</dbReference>
<dbReference type="HAMAP" id="MF_01554_A">
    <property type="entry name" value="GlmM_A"/>
    <property type="match status" value="1"/>
</dbReference>
<dbReference type="InterPro" id="IPR005844">
    <property type="entry name" value="A-D-PHexomutase_a/b/a-I"/>
</dbReference>
<dbReference type="InterPro" id="IPR016055">
    <property type="entry name" value="A-D-PHexomutase_a/b/a-I/II/III"/>
</dbReference>
<dbReference type="InterPro" id="IPR005845">
    <property type="entry name" value="A-D-PHexomutase_a/b/a-II"/>
</dbReference>
<dbReference type="InterPro" id="IPR005846">
    <property type="entry name" value="A-D-PHexomutase_a/b/a-III"/>
</dbReference>
<dbReference type="InterPro" id="IPR005843">
    <property type="entry name" value="A-D-PHexomutase_C"/>
</dbReference>
<dbReference type="InterPro" id="IPR036900">
    <property type="entry name" value="A-D-PHexomutase_C_sf"/>
</dbReference>
<dbReference type="InterPro" id="IPR016066">
    <property type="entry name" value="A-D-PHexomutase_CS"/>
</dbReference>
<dbReference type="InterPro" id="IPR005841">
    <property type="entry name" value="Alpha-D-phosphohexomutase_SF"/>
</dbReference>
<dbReference type="InterPro" id="IPR023666">
    <property type="entry name" value="GlmM_arc"/>
</dbReference>
<dbReference type="InterPro" id="IPR024086">
    <property type="entry name" value="GlmM_arc-type"/>
</dbReference>
<dbReference type="NCBIfam" id="TIGR03990">
    <property type="entry name" value="Arch_GlmM"/>
    <property type="match status" value="1"/>
</dbReference>
<dbReference type="PANTHER" id="PTHR43771">
    <property type="entry name" value="PHOSPHOMANNOMUTASE"/>
    <property type="match status" value="1"/>
</dbReference>
<dbReference type="PANTHER" id="PTHR43771:SF1">
    <property type="entry name" value="PHOSPHOMANNOMUTASE"/>
    <property type="match status" value="1"/>
</dbReference>
<dbReference type="Pfam" id="PF02878">
    <property type="entry name" value="PGM_PMM_I"/>
    <property type="match status" value="1"/>
</dbReference>
<dbReference type="Pfam" id="PF02879">
    <property type="entry name" value="PGM_PMM_II"/>
    <property type="match status" value="1"/>
</dbReference>
<dbReference type="Pfam" id="PF02880">
    <property type="entry name" value="PGM_PMM_III"/>
    <property type="match status" value="1"/>
</dbReference>
<dbReference type="Pfam" id="PF00408">
    <property type="entry name" value="PGM_PMM_IV"/>
    <property type="match status" value="1"/>
</dbReference>
<dbReference type="PRINTS" id="PR00509">
    <property type="entry name" value="PGMPMM"/>
</dbReference>
<dbReference type="SUPFAM" id="SSF55957">
    <property type="entry name" value="Phosphoglucomutase, C-terminal domain"/>
    <property type="match status" value="1"/>
</dbReference>
<dbReference type="SUPFAM" id="SSF53738">
    <property type="entry name" value="Phosphoglucomutase, first 3 domains"/>
    <property type="match status" value="3"/>
</dbReference>
<dbReference type="PROSITE" id="PS00710">
    <property type="entry name" value="PGM_PMM"/>
    <property type="match status" value="1"/>
</dbReference>
<gene>
    <name evidence="1" type="primary">glmM</name>
    <name type="ordered locus">TGAM_2095</name>
</gene>
<feature type="chain" id="PRO_1000215499" description="Probable phosphoglucosamine mutase">
    <location>
        <begin position="1"/>
        <end position="449"/>
    </location>
</feature>
<feature type="active site" description="Phosphoserine intermediate" evidence="1">
    <location>
        <position position="96"/>
    </location>
</feature>
<feature type="binding site" description="via phosphate group" evidence="1">
    <location>
        <position position="96"/>
    </location>
    <ligand>
        <name>Mg(2+)</name>
        <dbReference type="ChEBI" id="CHEBI:18420"/>
    </ligand>
</feature>
<feature type="binding site" evidence="1">
    <location>
        <position position="233"/>
    </location>
    <ligand>
        <name>Mg(2+)</name>
        <dbReference type="ChEBI" id="CHEBI:18420"/>
    </ligand>
</feature>
<feature type="binding site" evidence="1">
    <location>
        <position position="235"/>
    </location>
    <ligand>
        <name>Mg(2+)</name>
        <dbReference type="ChEBI" id="CHEBI:18420"/>
    </ligand>
</feature>
<feature type="binding site" evidence="1">
    <location>
        <position position="237"/>
    </location>
    <ligand>
        <name>Mg(2+)</name>
        <dbReference type="ChEBI" id="CHEBI:18420"/>
    </ligand>
</feature>
<feature type="modified residue" description="Phosphoserine" evidence="1">
    <location>
        <position position="96"/>
    </location>
</feature>
<keyword id="KW-0413">Isomerase</keyword>
<keyword id="KW-0460">Magnesium</keyword>
<keyword id="KW-0479">Metal-binding</keyword>
<keyword id="KW-0597">Phosphoprotein</keyword>
<keyword id="KW-1185">Reference proteome</keyword>
<proteinExistence type="inferred from homology"/>
<comment type="function">
    <text evidence="1">Catalyzes the conversion of glucosamine-6-phosphate to glucosamine-1-phosphate.</text>
</comment>
<comment type="catalytic activity">
    <reaction evidence="1">
        <text>alpha-D-glucosamine 1-phosphate = D-glucosamine 6-phosphate</text>
        <dbReference type="Rhea" id="RHEA:23424"/>
        <dbReference type="ChEBI" id="CHEBI:58516"/>
        <dbReference type="ChEBI" id="CHEBI:58725"/>
        <dbReference type="EC" id="5.4.2.10"/>
    </reaction>
</comment>
<comment type="cofactor">
    <cofactor evidence="1">
        <name>Mg(2+)</name>
        <dbReference type="ChEBI" id="CHEBI:18420"/>
    </cofactor>
    <text evidence="1">Binds 1 Mg(2+) ion per subunit.</text>
</comment>
<comment type="PTM">
    <text evidence="1">Activated by phosphorylation.</text>
</comment>
<comment type="similarity">
    <text evidence="1">Belongs to the phosphohexose mutase family.</text>
</comment>
<organism>
    <name type="scientific">Thermococcus gammatolerans (strain DSM 15229 / JCM 11827 / EJ3)</name>
    <dbReference type="NCBI Taxonomy" id="593117"/>
    <lineage>
        <taxon>Archaea</taxon>
        <taxon>Methanobacteriati</taxon>
        <taxon>Methanobacteriota</taxon>
        <taxon>Thermococci</taxon>
        <taxon>Thermococcales</taxon>
        <taxon>Thermococcaceae</taxon>
        <taxon>Thermococcus</taxon>
    </lineage>
</organism>
<sequence length="449" mass="49060">MGRYFGTSGIRGLFNECVTPELALKVGKAVGTYLGGGRVVVGMDTRTSSETLKSALISGLLSTGVEVIDIGLAPTPLTGFAIKLYEADAGVTITASHNPPEYNGIKVWQSNGMAYTPDMEAELERILESGNFRKVPWNEIGTLRRADPREEYIRKALEMVKLNDSYTVVVDSGNGAGSILSPYLQRELGNKVISLNSHPSGFFVRELEPNAKSLSGLAKTVRVMKADVGIAHDGDADRIGVVDDEGNFVEYEVMLSLIAGYMLRKFGKGKIVTTVDAGFALDDYVRPLGGEVIRTRVGDVAVADELAKHGGIFGGEPSGTWIIPQWNLTPDGIFAGALVLEMIDRLGPISELAREVPRYVTLRAKVPCPNEKKAKAMEIIAKEALKSFDYEKLIDIDGIRIENSDWWILFRPSGTEPIMRITLEAHTEDKAKELMEKAEKLVKEAVRRA</sequence>